<evidence type="ECO:0000255" key="1">
    <source>
        <dbReference type="HAMAP-Rule" id="MF_00518"/>
    </source>
</evidence>
<comment type="function">
    <text evidence="1">An aminoacyl-tRNA editing enzyme that deacylates mischarged D-aminoacyl-tRNAs. Also deacylates mischarged glycyl-tRNA(Ala), protecting cells against glycine mischarging by AlaRS. Acts via tRNA-based rather than protein-based catalysis; rejects L-amino acids rather than detecting D-amino acids in the active site. By recycling D-aminoacyl-tRNA to D-amino acids and free tRNA molecules, this enzyme counteracts the toxicity associated with the formation of D-aminoacyl-tRNA entities in vivo and helps enforce protein L-homochirality.</text>
</comment>
<comment type="catalytic activity">
    <reaction evidence="1">
        <text>glycyl-tRNA(Ala) + H2O = tRNA(Ala) + glycine + H(+)</text>
        <dbReference type="Rhea" id="RHEA:53744"/>
        <dbReference type="Rhea" id="RHEA-COMP:9657"/>
        <dbReference type="Rhea" id="RHEA-COMP:13640"/>
        <dbReference type="ChEBI" id="CHEBI:15377"/>
        <dbReference type="ChEBI" id="CHEBI:15378"/>
        <dbReference type="ChEBI" id="CHEBI:57305"/>
        <dbReference type="ChEBI" id="CHEBI:78442"/>
        <dbReference type="ChEBI" id="CHEBI:78522"/>
        <dbReference type="EC" id="3.1.1.96"/>
    </reaction>
</comment>
<comment type="catalytic activity">
    <reaction evidence="1">
        <text>a D-aminoacyl-tRNA + H2O = a tRNA + a D-alpha-amino acid + H(+)</text>
        <dbReference type="Rhea" id="RHEA:13953"/>
        <dbReference type="Rhea" id="RHEA-COMP:10123"/>
        <dbReference type="Rhea" id="RHEA-COMP:10124"/>
        <dbReference type="ChEBI" id="CHEBI:15377"/>
        <dbReference type="ChEBI" id="CHEBI:15378"/>
        <dbReference type="ChEBI" id="CHEBI:59871"/>
        <dbReference type="ChEBI" id="CHEBI:78442"/>
        <dbReference type="ChEBI" id="CHEBI:79333"/>
        <dbReference type="EC" id="3.1.1.96"/>
    </reaction>
</comment>
<comment type="subunit">
    <text evidence="1">Homodimer.</text>
</comment>
<comment type="subcellular location">
    <subcellularLocation>
        <location evidence="1">Cytoplasm</location>
    </subcellularLocation>
</comment>
<comment type="domain">
    <text evidence="1">A Gly-cisPro motif from one monomer fits into the active site of the other monomer to allow specific chiral rejection of L-amino acids.</text>
</comment>
<comment type="similarity">
    <text evidence="1">Belongs to the DTD family.</text>
</comment>
<protein>
    <recommendedName>
        <fullName evidence="1">D-aminoacyl-tRNA deacylase</fullName>
        <shortName evidence="1">DTD</shortName>
        <ecNumber evidence="1">3.1.1.96</ecNumber>
    </recommendedName>
    <alternativeName>
        <fullName evidence="1">Gly-tRNA(Ala) deacylase</fullName>
    </alternativeName>
</protein>
<keyword id="KW-0963">Cytoplasm</keyword>
<keyword id="KW-0378">Hydrolase</keyword>
<keyword id="KW-1185">Reference proteome</keyword>
<keyword id="KW-0694">RNA-binding</keyword>
<keyword id="KW-0820">tRNA-binding</keyword>
<sequence length="156" mass="16572">MIALIQRVSQARVTVDGRTTGEIGAGLLALVCAERGDTEAQAERLLAKLLSYRVFSDAEGRMNLPVQNMDGQGNAGGLLVVSQFTLAADTNSGTRPSFTPAAAPEDGRRLYDHFVTRARAAHPSVQTGEFGAMMQVSLTNDGPVTFWLRVPPAANA</sequence>
<accession>Q1LRC2</accession>
<organism>
    <name type="scientific">Cupriavidus metallidurans (strain ATCC 43123 / DSM 2839 / NBRC 102507 / CH34)</name>
    <name type="common">Ralstonia metallidurans</name>
    <dbReference type="NCBI Taxonomy" id="266264"/>
    <lineage>
        <taxon>Bacteria</taxon>
        <taxon>Pseudomonadati</taxon>
        <taxon>Pseudomonadota</taxon>
        <taxon>Betaproteobacteria</taxon>
        <taxon>Burkholderiales</taxon>
        <taxon>Burkholderiaceae</taxon>
        <taxon>Cupriavidus</taxon>
    </lineage>
</organism>
<reference key="1">
    <citation type="journal article" date="2010" name="PLoS ONE">
        <title>The complete genome sequence of Cupriavidus metallidurans strain CH34, a master survivalist in harsh and anthropogenic environments.</title>
        <authorList>
            <person name="Janssen P.J."/>
            <person name="Van Houdt R."/>
            <person name="Moors H."/>
            <person name="Monsieurs P."/>
            <person name="Morin N."/>
            <person name="Michaux A."/>
            <person name="Benotmane M.A."/>
            <person name="Leys N."/>
            <person name="Vallaeys T."/>
            <person name="Lapidus A."/>
            <person name="Monchy S."/>
            <person name="Medigue C."/>
            <person name="Taghavi S."/>
            <person name="McCorkle S."/>
            <person name="Dunn J."/>
            <person name="van der Lelie D."/>
            <person name="Mergeay M."/>
        </authorList>
    </citation>
    <scope>NUCLEOTIDE SEQUENCE [LARGE SCALE GENOMIC DNA]</scope>
    <source>
        <strain>ATCC 43123 / DSM 2839 / NBRC 102507 / CH34</strain>
    </source>
</reference>
<feature type="chain" id="PRO_0000259302" description="D-aminoacyl-tRNA deacylase">
    <location>
        <begin position="1"/>
        <end position="156"/>
    </location>
</feature>
<feature type="short sequence motif" description="Gly-cisPro motif, important for rejection of L-amino acids" evidence="1">
    <location>
        <begin position="142"/>
        <end position="143"/>
    </location>
</feature>
<proteinExistence type="inferred from homology"/>
<gene>
    <name evidence="1" type="primary">dtd</name>
    <name type="ordered locus">Rmet_0418</name>
</gene>
<name>DTD_CUPMC</name>
<dbReference type="EC" id="3.1.1.96" evidence="1"/>
<dbReference type="EMBL" id="CP000352">
    <property type="protein sequence ID" value="ABF07304.1"/>
    <property type="molecule type" value="Genomic_DNA"/>
</dbReference>
<dbReference type="RefSeq" id="WP_011515293.1">
    <property type="nucleotide sequence ID" value="NC_007973.1"/>
</dbReference>
<dbReference type="SMR" id="Q1LRC2"/>
<dbReference type="STRING" id="266264.Rmet_0418"/>
<dbReference type="KEGG" id="rme:Rmet_0418"/>
<dbReference type="eggNOG" id="COG1490">
    <property type="taxonomic scope" value="Bacteria"/>
</dbReference>
<dbReference type="HOGENOM" id="CLU_076901_1_1_4"/>
<dbReference type="Proteomes" id="UP000002429">
    <property type="component" value="Chromosome"/>
</dbReference>
<dbReference type="GO" id="GO:0005737">
    <property type="term" value="C:cytoplasm"/>
    <property type="evidence" value="ECO:0007669"/>
    <property type="project" value="UniProtKB-SubCell"/>
</dbReference>
<dbReference type="GO" id="GO:0051500">
    <property type="term" value="F:D-tyrosyl-tRNA(Tyr) deacylase activity"/>
    <property type="evidence" value="ECO:0007669"/>
    <property type="project" value="TreeGrafter"/>
</dbReference>
<dbReference type="GO" id="GO:0106026">
    <property type="term" value="F:Gly-tRNA(Ala) deacylase activity"/>
    <property type="evidence" value="ECO:0007669"/>
    <property type="project" value="UniProtKB-UniRule"/>
</dbReference>
<dbReference type="GO" id="GO:0043908">
    <property type="term" value="F:Ser(Gly)-tRNA(Ala) hydrolase activity"/>
    <property type="evidence" value="ECO:0007669"/>
    <property type="project" value="UniProtKB-UniRule"/>
</dbReference>
<dbReference type="GO" id="GO:0000049">
    <property type="term" value="F:tRNA binding"/>
    <property type="evidence" value="ECO:0007669"/>
    <property type="project" value="UniProtKB-UniRule"/>
</dbReference>
<dbReference type="GO" id="GO:0019478">
    <property type="term" value="P:D-amino acid catabolic process"/>
    <property type="evidence" value="ECO:0007669"/>
    <property type="project" value="UniProtKB-UniRule"/>
</dbReference>
<dbReference type="CDD" id="cd00563">
    <property type="entry name" value="Dtyr_deacylase"/>
    <property type="match status" value="1"/>
</dbReference>
<dbReference type="FunFam" id="3.50.80.10:FF:000001">
    <property type="entry name" value="D-aminoacyl-tRNA deacylase"/>
    <property type="match status" value="1"/>
</dbReference>
<dbReference type="Gene3D" id="3.50.80.10">
    <property type="entry name" value="D-tyrosyl-tRNA(Tyr) deacylase"/>
    <property type="match status" value="1"/>
</dbReference>
<dbReference type="HAMAP" id="MF_00518">
    <property type="entry name" value="Deacylase_Dtd"/>
    <property type="match status" value="1"/>
</dbReference>
<dbReference type="InterPro" id="IPR003732">
    <property type="entry name" value="Daa-tRNA_deacyls_DTD"/>
</dbReference>
<dbReference type="InterPro" id="IPR023509">
    <property type="entry name" value="DTD-like_sf"/>
</dbReference>
<dbReference type="NCBIfam" id="TIGR00256">
    <property type="entry name" value="D-aminoacyl-tRNA deacylase"/>
    <property type="match status" value="1"/>
</dbReference>
<dbReference type="PANTHER" id="PTHR10472:SF5">
    <property type="entry name" value="D-AMINOACYL-TRNA DEACYLASE 1"/>
    <property type="match status" value="1"/>
</dbReference>
<dbReference type="PANTHER" id="PTHR10472">
    <property type="entry name" value="D-TYROSYL-TRNA TYR DEACYLASE"/>
    <property type="match status" value="1"/>
</dbReference>
<dbReference type="Pfam" id="PF02580">
    <property type="entry name" value="Tyr_Deacylase"/>
    <property type="match status" value="1"/>
</dbReference>
<dbReference type="SUPFAM" id="SSF69500">
    <property type="entry name" value="DTD-like"/>
    <property type="match status" value="1"/>
</dbReference>